<comment type="function">
    <text evidence="1">Catalyzes the formation of sulfite from phosphoadenosine 5'-phosphosulfate (PAPS) using thioredoxin as an electron donor.</text>
</comment>
<comment type="catalytic activity">
    <reaction evidence="1">
        <text>[thioredoxin]-disulfide + sulfite + adenosine 3',5'-bisphosphate + 2 H(+) = [thioredoxin]-dithiol + 3'-phosphoadenylyl sulfate</text>
        <dbReference type="Rhea" id="RHEA:11724"/>
        <dbReference type="Rhea" id="RHEA-COMP:10698"/>
        <dbReference type="Rhea" id="RHEA-COMP:10700"/>
        <dbReference type="ChEBI" id="CHEBI:15378"/>
        <dbReference type="ChEBI" id="CHEBI:17359"/>
        <dbReference type="ChEBI" id="CHEBI:29950"/>
        <dbReference type="ChEBI" id="CHEBI:50058"/>
        <dbReference type="ChEBI" id="CHEBI:58339"/>
        <dbReference type="ChEBI" id="CHEBI:58343"/>
        <dbReference type="EC" id="1.8.4.8"/>
    </reaction>
</comment>
<comment type="pathway">
    <text evidence="1">Sulfur metabolism; hydrogen sulfide biosynthesis; sulfite from sulfate: step 3/3.</text>
</comment>
<comment type="subcellular location">
    <subcellularLocation>
        <location evidence="1">Cytoplasm</location>
    </subcellularLocation>
</comment>
<comment type="similarity">
    <text evidence="1">Belongs to the PAPS reductase family. CysH subfamily.</text>
</comment>
<organism>
    <name type="scientific">Citrobacter koseri (strain ATCC BAA-895 / CDC 4225-83 / SGSC4696)</name>
    <dbReference type="NCBI Taxonomy" id="290338"/>
    <lineage>
        <taxon>Bacteria</taxon>
        <taxon>Pseudomonadati</taxon>
        <taxon>Pseudomonadota</taxon>
        <taxon>Gammaproteobacteria</taxon>
        <taxon>Enterobacterales</taxon>
        <taxon>Enterobacteriaceae</taxon>
        <taxon>Citrobacter</taxon>
    </lineage>
</organism>
<feature type="chain" id="PRO_1000008920" description="Phosphoadenosine 5'-phosphosulfate reductase">
    <location>
        <begin position="1"/>
        <end position="244"/>
    </location>
</feature>
<feature type="active site" description="Nucleophile; cysteine thiosulfonate intermediate" evidence="1">
    <location>
        <position position="239"/>
    </location>
</feature>
<sequence length="244" mass="27959">MSVLDLNALNELPKVERVMALAETNAQLEKQDAEGRVAWALENLPGEYVLSSSFGIQAAVSLHLVNQVRPDIPVILTDTGYLFPETYQFIDELTEKLNLNLKVYRATESAAWQEARYGKLWEQGVEGIEKYNDINKVEPMNRALKELNAQTWFAGLRREQSGSRAHLPVLAIQRGVFKVLPIIDWDNRTVYQYLQKHGLKYHPLWDQGYLSVGDTHTTRKWEPGMAEEETRFFGLKRECGLHEG</sequence>
<evidence type="ECO:0000255" key="1">
    <source>
        <dbReference type="HAMAP-Rule" id="MF_00063"/>
    </source>
</evidence>
<reference key="1">
    <citation type="submission" date="2007-08" db="EMBL/GenBank/DDBJ databases">
        <authorList>
            <consortium name="The Citrobacter koseri Genome Sequencing Project"/>
            <person name="McClelland M."/>
            <person name="Sanderson E.K."/>
            <person name="Porwollik S."/>
            <person name="Spieth J."/>
            <person name="Clifton W.S."/>
            <person name="Latreille P."/>
            <person name="Courtney L."/>
            <person name="Wang C."/>
            <person name="Pepin K."/>
            <person name="Bhonagiri V."/>
            <person name="Nash W."/>
            <person name="Johnson M."/>
            <person name="Thiruvilangam P."/>
            <person name="Wilson R."/>
        </authorList>
    </citation>
    <scope>NUCLEOTIDE SEQUENCE [LARGE SCALE GENOMIC DNA]</scope>
    <source>
        <strain>ATCC BAA-895 / CDC 4225-83 / SGSC4696</strain>
    </source>
</reference>
<dbReference type="EC" id="1.8.4.8" evidence="1"/>
<dbReference type="EMBL" id="CP000822">
    <property type="protein sequence ID" value="ABV15182.1"/>
    <property type="molecule type" value="Genomic_DNA"/>
</dbReference>
<dbReference type="RefSeq" id="WP_012134870.1">
    <property type="nucleotide sequence ID" value="NC_009792.1"/>
</dbReference>
<dbReference type="SMR" id="A8ANW8"/>
<dbReference type="STRING" id="290338.CKO_04116"/>
<dbReference type="GeneID" id="45137752"/>
<dbReference type="KEGG" id="cko:CKO_04116"/>
<dbReference type="HOGENOM" id="CLU_044089_3_0_6"/>
<dbReference type="OrthoDB" id="9794018at2"/>
<dbReference type="UniPathway" id="UPA00140">
    <property type="reaction ID" value="UER00206"/>
</dbReference>
<dbReference type="Proteomes" id="UP000008148">
    <property type="component" value="Chromosome"/>
</dbReference>
<dbReference type="GO" id="GO:0005737">
    <property type="term" value="C:cytoplasm"/>
    <property type="evidence" value="ECO:0007669"/>
    <property type="project" value="UniProtKB-SubCell"/>
</dbReference>
<dbReference type="GO" id="GO:0004604">
    <property type="term" value="F:phosphoadenylyl-sulfate reductase (thioredoxin) activity"/>
    <property type="evidence" value="ECO:0007669"/>
    <property type="project" value="UniProtKB-UniRule"/>
</dbReference>
<dbReference type="GO" id="GO:0070814">
    <property type="term" value="P:hydrogen sulfide biosynthetic process"/>
    <property type="evidence" value="ECO:0007669"/>
    <property type="project" value="UniProtKB-UniRule"/>
</dbReference>
<dbReference type="GO" id="GO:0019379">
    <property type="term" value="P:sulfate assimilation, phosphoadenylyl sulfate reduction by phosphoadenylyl-sulfate reductase (thioredoxin)"/>
    <property type="evidence" value="ECO:0007669"/>
    <property type="project" value="UniProtKB-UniRule"/>
</dbReference>
<dbReference type="CDD" id="cd23945">
    <property type="entry name" value="PAPS_reductase"/>
    <property type="match status" value="1"/>
</dbReference>
<dbReference type="FunFam" id="3.40.50.620:FF:000043">
    <property type="entry name" value="Phosphoadenosine phosphosulfate reductase"/>
    <property type="match status" value="1"/>
</dbReference>
<dbReference type="Gene3D" id="3.40.50.620">
    <property type="entry name" value="HUPs"/>
    <property type="match status" value="1"/>
</dbReference>
<dbReference type="HAMAP" id="MF_00063">
    <property type="entry name" value="CysH"/>
    <property type="match status" value="1"/>
</dbReference>
<dbReference type="InterPro" id="IPR004511">
    <property type="entry name" value="PAPS/APS_Rdtase"/>
</dbReference>
<dbReference type="InterPro" id="IPR002500">
    <property type="entry name" value="PAPS_reduct_dom"/>
</dbReference>
<dbReference type="InterPro" id="IPR011800">
    <property type="entry name" value="PAPS_reductase_CysH"/>
</dbReference>
<dbReference type="InterPro" id="IPR014729">
    <property type="entry name" value="Rossmann-like_a/b/a_fold"/>
</dbReference>
<dbReference type="NCBIfam" id="TIGR00434">
    <property type="entry name" value="cysH"/>
    <property type="match status" value="1"/>
</dbReference>
<dbReference type="NCBIfam" id="TIGR02057">
    <property type="entry name" value="PAPS_reductase"/>
    <property type="match status" value="1"/>
</dbReference>
<dbReference type="NCBIfam" id="NF002537">
    <property type="entry name" value="PRK02090.1"/>
    <property type="match status" value="1"/>
</dbReference>
<dbReference type="PANTHER" id="PTHR46509">
    <property type="entry name" value="PHOSPHOADENOSINE PHOSPHOSULFATE REDUCTASE"/>
    <property type="match status" value="1"/>
</dbReference>
<dbReference type="PANTHER" id="PTHR46509:SF1">
    <property type="entry name" value="PHOSPHOADENOSINE PHOSPHOSULFATE REDUCTASE"/>
    <property type="match status" value="1"/>
</dbReference>
<dbReference type="Pfam" id="PF01507">
    <property type="entry name" value="PAPS_reduct"/>
    <property type="match status" value="1"/>
</dbReference>
<dbReference type="PIRSF" id="PIRSF000857">
    <property type="entry name" value="PAPS_reductase"/>
    <property type="match status" value="1"/>
</dbReference>
<dbReference type="SUPFAM" id="SSF52402">
    <property type="entry name" value="Adenine nucleotide alpha hydrolases-like"/>
    <property type="match status" value="1"/>
</dbReference>
<keyword id="KW-0963">Cytoplasm</keyword>
<keyword id="KW-0560">Oxidoreductase</keyword>
<keyword id="KW-1185">Reference proteome</keyword>
<gene>
    <name evidence="1" type="primary">cysH</name>
    <name type="ordered locus">CKO_04116</name>
</gene>
<protein>
    <recommendedName>
        <fullName evidence="1">Phosphoadenosine 5'-phosphosulfate reductase</fullName>
        <shortName evidence="1">PAPS reductase</shortName>
        <ecNumber evidence="1">1.8.4.8</ecNumber>
    </recommendedName>
    <alternativeName>
        <fullName evidence="1">3'-phosphoadenylylsulfate reductase</fullName>
    </alternativeName>
    <alternativeName>
        <fullName evidence="1">PAPS reductase, thioredoxin dependent</fullName>
    </alternativeName>
    <alternativeName>
        <fullName evidence="1">PAPS sulfotransferase</fullName>
    </alternativeName>
    <alternativeName>
        <fullName evidence="1">PAdoPS reductase</fullName>
    </alternativeName>
</protein>
<name>CYSH_CITK8</name>
<accession>A8ANW8</accession>
<proteinExistence type="inferred from homology"/>